<sequence>MAQLLGDAEIQSQASKLSGWTLEGSKLQTTRKFKDFIEAIAFVNKLVEPAESAGHHPDIEISYNKVKVTLTTHDAGGLTQKDFDVAATISQIN</sequence>
<reference key="1">
    <citation type="journal article" date="2014" name="Stand. Genomic Sci.">
        <title>Complete genome sequence of Anabaena variabilis ATCC 29413.</title>
        <authorList>
            <person name="Thiel T."/>
            <person name="Pratte B.S."/>
            <person name="Zhong J."/>
            <person name="Goodwin L."/>
            <person name="Copeland A."/>
            <person name="Lucas S."/>
            <person name="Han C."/>
            <person name="Pitluck S."/>
            <person name="Land M.L."/>
            <person name="Kyrpides N.C."/>
            <person name="Woyke T."/>
        </authorList>
    </citation>
    <scope>NUCLEOTIDE SEQUENCE [LARGE SCALE GENOMIC DNA]</scope>
    <source>
        <strain>ATCC 29413 / PCC 7937</strain>
    </source>
</reference>
<accession>Q3MA60</accession>
<comment type="catalytic activity">
    <reaction evidence="1">
        <text>(4aS,6R)-4a-hydroxy-L-erythro-5,6,7,8-tetrahydrobiopterin = (6R)-L-erythro-6,7-dihydrobiopterin + H2O</text>
        <dbReference type="Rhea" id="RHEA:11920"/>
        <dbReference type="ChEBI" id="CHEBI:15377"/>
        <dbReference type="ChEBI" id="CHEBI:15642"/>
        <dbReference type="ChEBI" id="CHEBI:43120"/>
        <dbReference type="EC" id="4.2.1.96"/>
    </reaction>
</comment>
<comment type="similarity">
    <text evidence="1">Belongs to the pterin-4-alpha-carbinolamine dehydratase family.</text>
</comment>
<name>PHS_TRIV2</name>
<keyword id="KW-0456">Lyase</keyword>
<proteinExistence type="inferred from homology"/>
<protein>
    <recommendedName>
        <fullName evidence="1">Putative pterin-4-alpha-carbinolamine dehydratase</fullName>
        <shortName evidence="1">PHS</shortName>
        <ecNumber evidence="1">4.2.1.96</ecNumber>
    </recommendedName>
    <alternativeName>
        <fullName evidence="1">4-alpha-hydroxy-tetrahydropterin dehydratase</fullName>
    </alternativeName>
    <alternativeName>
        <fullName evidence="1">Pterin carbinolamine dehydratase</fullName>
        <shortName evidence="1">PCD</shortName>
    </alternativeName>
</protein>
<organism>
    <name type="scientific">Trichormus variabilis (strain ATCC 29413 / PCC 7937)</name>
    <name type="common">Anabaena variabilis</name>
    <dbReference type="NCBI Taxonomy" id="240292"/>
    <lineage>
        <taxon>Bacteria</taxon>
        <taxon>Bacillati</taxon>
        <taxon>Cyanobacteriota</taxon>
        <taxon>Cyanophyceae</taxon>
        <taxon>Nostocales</taxon>
        <taxon>Nostocaceae</taxon>
        <taxon>Trichormus</taxon>
    </lineage>
</organism>
<evidence type="ECO:0000255" key="1">
    <source>
        <dbReference type="HAMAP-Rule" id="MF_00434"/>
    </source>
</evidence>
<dbReference type="EC" id="4.2.1.96" evidence="1"/>
<dbReference type="EMBL" id="CP000117">
    <property type="protein sequence ID" value="ABA22126.1"/>
    <property type="molecule type" value="Genomic_DNA"/>
</dbReference>
<dbReference type="SMR" id="Q3MA60"/>
<dbReference type="KEGG" id="ava:Ava_2511"/>
<dbReference type="eggNOG" id="COG2154">
    <property type="taxonomic scope" value="Bacteria"/>
</dbReference>
<dbReference type="HOGENOM" id="CLU_081974_4_0_3"/>
<dbReference type="Proteomes" id="UP000002533">
    <property type="component" value="Chromosome"/>
</dbReference>
<dbReference type="GO" id="GO:0008124">
    <property type="term" value="F:4-alpha-hydroxytetrahydrobiopterin dehydratase activity"/>
    <property type="evidence" value="ECO:0007669"/>
    <property type="project" value="UniProtKB-UniRule"/>
</dbReference>
<dbReference type="GO" id="GO:0006729">
    <property type="term" value="P:tetrahydrobiopterin biosynthetic process"/>
    <property type="evidence" value="ECO:0007669"/>
    <property type="project" value="InterPro"/>
</dbReference>
<dbReference type="CDD" id="cd00488">
    <property type="entry name" value="PCD_DCoH"/>
    <property type="match status" value="1"/>
</dbReference>
<dbReference type="Gene3D" id="3.30.1360.20">
    <property type="entry name" value="Transcriptional coactivator/pterin dehydratase"/>
    <property type="match status" value="1"/>
</dbReference>
<dbReference type="HAMAP" id="MF_00434">
    <property type="entry name" value="Pterin_4_alpha"/>
    <property type="match status" value="1"/>
</dbReference>
<dbReference type="InterPro" id="IPR036428">
    <property type="entry name" value="PCD_sf"/>
</dbReference>
<dbReference type="InterPro" id="IPR001533">
    <property type="entry name" value="Pterin_deHydtase"/>
</dbReference>
<dbReference type="NCBIfam" id="NF002017">
    <property type="entry name" value="PRK00823.1-2"/>
    <property type="match status" value="1"/>
</dbReference>
<dbReference type="PANTHER" id="PTHR12599">
    <property type="entry name" value="PTERIN-4-ALPHA-CARBINOLAMINE DEHYDRATASE"/>
    <property type="match status" value="1"/>
</dbReference>
<dbReference type="PANTHER" id="PTHR12599:SF0">
    <property type="entry name" value="PTERIN-4-ALPHA-CARBINOLAMINE DEHYDRATASE"/>
    <property type="match status" value="1"/>
</dbReference>
<dbReference type="Pfam" id="PF01329">
    <property type="entry name" value="Pterin_4a"/>
    <property type="match status" value="1"/>
</dbReference>
<dbReference type="SUPFAM" id="SSF55248">
    <property type="entry name" value="PCD-like"/>
    <property type="match status" value="1"/>
</dbReference>
<gene>
    <name type="ordered locus">Ava_2511</name>
</gene>
<feature type="chain" id="PRO_0000231439" description="Putative pterin-4-alpha-carbinolamine dehydratase">
    <location>
        <begin position="1"/>
        <end position="93"/>
    </location>
</feature>